<name>YFLA_BACSU</name>
<comment type="subcellular location">
    <subcellularLocation>
        <location evidence="2">Cell membrane</location>
        <topology evidence="2">Multi-pass membrane protein</topology>
    </subcellularLocation>
</comment>
<comment type="similarity">
    <text evidence="2">Belongs to the alanine or glycine:cation symporter (AGCS) (TC 2.A.25) family.</text>
</comment>
<protein>
    <recommendedName>
        <fullName>Uncharacterized transporter YflA</fullName>
    </recommendedName>
</protein>
<sequence>MERLLVWIEHISDWLWGPPLIILLTGTGLYFTILLKGFQFRYPLYIFKQTIGSVGKKPKGEGTVTPLQALTSALSSTIGAANIVGVPAAIMFGGPGAVFWMWLIALFAMAIKFSESVLAVHYREKNEQGEYVGGPMYYITKGLRMKWLGVFFSVALIVELIPSIMVQGNSVSVSLAETFSFNKIYAGIGIAFLIGLVVIGGVKRIGKVTEFVVPLMAGAYAGAGLLIVLMNLSSVPAFFSLVFSNAFTSSSAVGGFAGAALAETVRWGFARGLYSNEAGMGTAPIAHAAAMTDHPVRQGFWSVIGIVIDTLIICTTTAFIVLASGVWTGKNASNDPAALTTAAFQHYFGSGGGYFVSVSLVFFVVSTIMVVIFYGVKQAEFLFGRLAGHVIKFVYLAAIIIGAAGGAKAIWGVLDLALVFIVVPNVIALLLLSRKVKALYTEFFTSEQYYLKDIRKTKQKPVYPTKEAKNS</sequence>
<dbReference type="EMBL" id="D86417">
    <property type="protein sequence ID" value="BAA22294.1"/>
    <property type="molecule type" value="Genomic_DNA"/>
</dbReference>
<dbReference type="EMBL" id="AL009126">
    <property type="protein sequence ID" value="CAB12604.1"/>
    <property type="molecule type" value="Genomic_DNA"/>
</dbReference>
<dbReference type="PIR" id="G69809">
    <property type="entry name" value="G69809"/>
</dbReference>
<dbReference type="RefSeq" id="NP_388656.1">
    <property type="nucleotide sequence ID" value="NC_000964.3"/>
</dbReference>
<dbReference type="RefSeq" id="WP_003243631.1">
    <property type="nucleotide sequence ID" value="NZ_OZ025638.1"/>
</dbReference>
<dbReference type="SMR" id="O34708"/>
<dbReference type="FunCoup" id="O34708">
    <property type="interactions" value="37"/>
</dbReference>
<dbReference type="STRING" id="224308.BSU07750"/>
<dbReference type="PaxDb" id="224308-BSU07750"/>
<dbReference type="EnsemblBacteria" id="CAB12604">
    <property type="protein sequence ID" value="CAB12604"/>
    <property type="gene ID" value="BSU_07750"/>
</dbReference>
<dbReference type="GeneID" id="939686"/>
<dbReference type="KEGG" id="bsu:BSU07750"/>
<dbReference type="PATRIC" id="fig|224308.179.peg.839"/>
<dbReference type="eggNOG" id="COG1115">
    <property type="taxonomic scope" value="Bacteria"/>
</dbReference>
<dbReference type="InParanoid" id="O34708"/>
<dbReference type="OrthoDB" id="9804874at2"/>
<dbReference type="PhylomeDB" id="O34708"/>
<dbReference type="BioCyc" id="BSUB:BSU07750-MONOMER"/>
<dbReference type="Proteomes" id="UP000001570">
    <property type="component" value="Chromosome"/>
</dbReference>
<dbReference type="GO" id="GO:0005886">
    <property type="term" value="C:plasma membrane"/>
    <property type="evidence" value="ECO:0000318"/>
    <property type="project" value="GO_Central"/>
</dbReference>
<dbReference type="GO" id="GO:0005283">
    <property type="term" value="F:amino acid:sodium symporter activity"/>
    <property type="evidence" value="ECO:0007669"/>
    <property type="project" value="InterPro"/>
</dbReference>
<dbReference type="FunFam" id="1.20.1740.10:FF:000004">
    <property type="entry name" value="Sodium:alanine symporter family protein"/>
    <property type="match status" value="1"/>
</dbReference>
<dbReference type="Gene3D" id="1.20.1740.10">
    <property type="entry name" value="Amino acid/polyamine transporter I"/>
    <property type="match status" value="1"/>
</dbReference>
<dbReference type="InterPro" id="IPR001463">
    <property type="entry name" value="Na/Ala_symport"/>
</dbReference>
<dbReference type="NCBIfam" id="TIGR00835">
    <property type="entry name" value="agcS"/>
    <property type="match status" value="1"/>
</dbReference>
<dbReference type="PANTHER" id="PTHR30330">
    <property type="entry name" value="AGSS FAMILY TRANSPORTER, SODIUM-ALANINE"/>
    <property type="match status" value="1"/>
</dbReference>
<dbReference type="PANTHER" id="PTHR30330:SF3">
    <property type="entry name" value="TRANSCRIPTIONAL REGULATOR, LRP FAMILY"/>
    <property type="match status" value="1"/>
</dbReference>
<dbReference type="Pfam" id="PF01235">
    <property type="entry name" value="Na_Ala_symp"/>
    <property type="match status" value="1"/>
</dbReference>
<dbReference type="PRINTS" id="PR00175">
    <property type="entry name" value="NAALASMPORT"/>
</dbReference>
<gene>
    <name type="primary">yflA</name>
    <name type="ordered locus">BSU07750</name>
</gene>
<feature type="chain" id="PRO_0000376845" description="Uncharacterized transporter YflA">
    <location>
        <begin position="1"/>
        <end position="471"/>
    </location>
</feature>
<feature type="transmembrane region" description="Helical" evidence="1">
    <location>
        <begin position="15"/>
        <end position="35"/>
    </location>
</feature>
<feature type="transmembrane region" description="Helical" evidence="1">
    <location>
        <begin position="66"/>
        <end position="86"/>
    </location>
</feature>
<feature type="transmembrane region" description="Helical" evidence="1">
    <location>
        <begin position="89"/>
        <end position="109"/>
    </location>
</feature>
<feature type="transmembrane region" description="Helical" evidence="1">
    <location>
        <begin position="147"/>
        <end position="167"/>
    </location>
</feature>
<feature type="transmembrane region" description="Helical" evidence="1">
    <location>
        <begin position="179"/>
        <end position="199"/>
    </location>
</feature>
<feature type="transmembrane region" description="Helical" evidence="1">
    <location>
        <begin position="210"/>
        <end position="230"/>
    </location>
</feature>
<feature type="transmembrane region" description="Helical" evidence="1">
    <location>
        <begin position="237"/>
        <end position="257"/>
    </location>
</feature>
<feature type="transmembrane region" description="Helical" evidence="1">
    <location>
        <begin position="303"/>
        <end position="323"/>
    </location>
</feature>
<feature type="transmembrane region" description="Helical" evidence="1">
    <location>
        <begin position="353"/>
        <end position="373"/>
    </location>
</feature>
<feature type="transmembrane region" description="Helical" evidence="1">
    <location>
        <begin position="386"/>
        <end position="406"/>
    </location>
</feature>
<feature type="transmembrane region" description="Helical" evidence="1">
    <location>
        <begin position="410"/>
        <end position="430"/>
    </location>
</feature>
<proteinExistence type="inferred from homology"/>
<accession>O34708</accession>
<accession>Q79EU1</accession>
<reference key="1">
    <citation type="journal article" date="1997" name="Gene">
        <title>Cloning and sequencing of a 35.7 kb in the 70 degree-73 degree region of the Bacillus subtilis genome reveal genes for a new two-component system, three spore germination proteins, an iron uptake system and a general stress response protein.</title>
        <authorList>
            <person name="Yamamoto H."/>
            <person name="Uchiyama S."/>
            <person name="Nugroho F.A."/>
            <person name="Sekiguchi J."/>
        </authorList>
    </citation>
    <scope>NUCLEOTIDE SEQUENCE [GENOMIC DNA]</scope>
    <source>
        <strain>168 / AC327</strain>
    </source>
</reference>
<reference key="2">
    <citation type="journal article" date="1997" name="Nature">
        <title>The complete genome sequence of the Gram-positive bacterium Bacillus subtilis.</title>
        <authorList>
            <person name="Kunst F."/>
            <person name="Ogasawara N."/>
            <person name="Moszer I."/>
            <person name="Albertini A.M."/>
            <person name="Alloni G."/>
            <person name="Azevedo V."/>
            <person name="Bertero M.G."/>
            <person name="Bessieres P."/>
            <person name="Bolotin A."/>
            <person name="Borchert S."/>
            <person name="Borriss R."/>
            <person name="Boursier L."/>
            <person name="Brans A."/>
            <person name="Braun M."/>
            <person name="Brignell S.C."/>
            <person name="Bron S."/>
            <person name="Brouillet S."/>
            <person name="Bruschi C.V."/>
            <person name="Caldwell B."/>
            <person name="Capuano V."/>
            <person name="Carter N.M."/>
            <person name="Choi S.-K."/>
            <person name="Codani J.-J."/>
            <person name="Connerton I.F."/>
            <person name="Cummings N.J."/>
            <person name="Daniel R.A."/>
            <person name="Denizot F."/>
            <person name="Devine K.M."/>
            <person name="Duesterhoeft A."/>
            <person name="Ehrlich S.D."/>
            <person name="Emmerson P.T."/>
            <person name="Entian K.-D."/>
            <person name="Errington J."/>
            <person name="Fabret C."/>
            <person name="Ferrari E."/>
            <person name="Foulger D."/>
            <person name="Fritz C."/>
            <person name="Fujita M."/>
            <person name="Fujita Y."/>
            <person name="Fuma S."/>
            <person name="Galizzi A."/>
            <person name="Galleron N."/>
            <person name="Ghim S.-Y."/>
            <person name="Glaser P."/>
            <person name="Goffeau A."/>
            <person name="Golightly E.J."/>
            <person name="Grandi G."/>
            <person name="Guiseppi G."/>
            <person name="Guy B.J."/>
            <person name="Haga K."/>
            <person name="Haiech J."/>
            <person name="Harwood C.R."/>
            <person name="Henaut A."/>
            <person name="Hilbert H."/>
            <person name="Holsappel S."/>
            <person name="Hosono S."/>
            <person name="Hullo M.-F."/>
            <person name="Itaya M."/>
            <person name="Jones L.-M."/>
            <person name="Joris B."/>
            <person name="Karamata D."/>
            <person name="Kasahara Y."/>
            <person name="Klaerr-Blanchard M."/>
            <person name="Klein C."/>
            <person name="Kobayashi Y."/>
            <person name="Koetter P."/>
            <person name="Koningstein G."/>
            <person name="Krogh S."/>
            <person name="Kumano M."/>
            <person name="Kurita K."/>
            <person name="Lapidus A."/>
            <person name="Lardinois S."/>
            <person name="Lauber J."/>
            <person name="Lazarevic V."/>
            <person name="Lee S.-M."/>
            <person name="Levine A."/>
            <person name="Liu H."/>
            <person name="Masuda S."/>
            <person name="Mauel C."/>
            <person name="Medigue C."/>
            <person name="Medina N."/>
            <person name="Mellado R.P."/>
            <person name="Mizuno M."/>
            <person name="Moestl D."/>
            <person name="Nakai S."/>
            <person name="Noback M."/>
            <person name="Noone D."/>
            <person name="O'Reilly M."/>
            <person name="Ogawa K."/>
            <person name="Ogiwara A."/>
            <person name="Oudega B."/>
            <person name="Park S.-H."/>
            <person name="Parro V."/>
            <person name="Pohl T.M."/>
            <person name="Portetelle D."/>
            <person name="Porwollik S."/>
            <person name="Prescott A.M."/>
            <person name="Presecan E."/>
            <person name="Pujic P."/>
            <person name="Purnelle B."/>
            <person name="Rapoport G."/>
            <person name="Rey M."/>
            <person name="Reynolds S."/>
            <person name="Rieger M."/>
            <person name="Rivolta C."/>
            <person name="Rocha E."/>
            <person name="Roche B."/>
            <person name="Rose M."/>
            <person name="Sadaie Y."/>
            <person name="Sato T."/>
            <person name="Scanlan E."/>
            <person name="Schleich S."/>
            <person name="Schroeter R."/>
            <person name="Scoffone F."/>
            <person name="Sekiguchi J."/>
            <person name="Sekowska A."/>
            <person name="Seror S.J."/>
            <person name="Serror P."/>
            <person name="Shin B.-S."/>
            <person name="Soldo B."/>
            <person name="Sorokin A."/>
            <person name="Tacconi E."/>
            <person name="Takagi T."/>
            <person name="Takahashi H."/>
            <person name="Takemaru K."/>
            <person name="Takeuchi M."/>
            <person name="Tamakoshi A."/>
            <person name="Tanaka T."/>
            <person name="Terpstra P."/>
            <person name="Tognoni A."/>
            <person name="Tosato V."/>
            <person name="Uchiyama S."/>
            <person name="Vandenbol M."/>
            <person name="Vannier F."/>
            <person name="Vassarotti A."/>
            <person name="Viari A."/>
            <person name="Wambutt R."/>
            <person name="Wedler E."/>
            <person name="Wedler H."/>
            <person name="Weitzenegger T."/>
            <person name="Winters P."/>
            <person name="Wipat A."/>
            <person name="Yamamoto H."/>
            <person name="Yamane K."/>
            <person name="Yasumoto K."/>
            <person name="Yata K."/>
            <person name="Yoshida K."/>
            <person name="Yoshikawa H.-F."/>
            <person name="Zumstein E."/>
            <person name="Yoshikawa H."/>
            <person name="Danchin A."/>
        </authorList>
    </citation>
    <scope>NUCLEOTIDE SEQUENCE [LARGE SCALE GENOMIC DNA]</scope>
    <source>
        <strain>168</strain>
    </source>
</reference>
<organism>
    <name type="scientific">Bacillus subtilis (strain 168)</name>
    <dbReference type="NCBI Taxonomy" id="224308"/>
    <lineage>
        <taxon>Bacteria</taxon>
        <taxon>Bacillati</taxon>
        <taxon>Bacillota</taxon>
        <taxon>Bacilli</taxon>
        <taxon>Bacillales</taxon>
        <taxon>Bacillaceae</taxon>
        <taxon>Bacillus</taxon>
    </lineage>
</organism>
<evidence type="ECO:0000255" key="1"/>
<evidence type="ECO:0000305" key="2"/>
<keyword id="KW-1003">Cell membrane</keyword>
<keyword id="KW-0472">Membrane</keyword>
<keyword id="KW-1185">Reference proteome</keyword>
<keyword id="KW-0769">Symport</keyword>
<keyword id="KW-0812">Transmembrane</keyword>
<keyword id="KW-1133">Transmembrane helix</keyword>
<keyword id="KW-0813">Transport</keyword>